<reference key="1">
    <citation type="journal article" date="2011" name="Proc. Natl. Acad. Sci. U.S.A.">
        <title>Genomic anatomy of Escherichia coli O157:H7 outbreaks.</title>
        <authorList>
            <person name="Eppinger M."/>
            <person name="Mammel M.K."/>
            <person name="Leclerc J.E."/>
            <person name="Ravel J."/>
            <person name="Cebula T.A."/>
        </authorList>
    </citation>
    <scope>NUCLEOTIDE SEQUENCE [LARGE SCALE GENOMIC DNA]</scope>
    <source>
        <strain>EC4115 / EHEC</strain>
    </source>
</reference>
<accession>B5YRL4</accession>
<sequence>MAHRPRWTLSQVTELFEKPLLDLLFEAQQVHRQHFDPRQVQVSTLLSIKTGACPEDCKYCPQSSRYKTGLEAERLMEVEQVLESARKAKAAGSTRFCMGAAWKNPHERDMSYLEQMVQGVKAMGLEACMTLGTLSESQAQRLANAGLDYYNHNLDTSPEFYGNIITTRTYQERLDTLEKVRDAGIKVCSGGIVGLGETVKDRAGLLLQLANLPTPPESVPINMLVKVKGTPLADNDDVDAFDFIRTIAVARIMMPTSYVRLSAGREQMNEQTQAMCFMAGANSIFYGCKLLTTPNPEEDKDLQLFRKLGLNPQQTAVLAGDNEQQQRLEQALMTPDTDEYYNAAAL</sequence>
<keyword id="KW-0001">2Fe-2S</keyword>
<keyword id="KW-0004">4Fe-4S</keyword>
<keyword id="KW-0093">Biotin biosynthesis</keyword>
<keyword id="KW-0408">Iron</keyword>
<keyword id="KW-0411">Iron-sulfur</keyword>
<keyword id="KW-0479">Metal-binding</keyword>
<keyword id="KW-0949">S-adenosyl-L-methionine</keyword>
<keyword id="KW-0808">Transferase</keyword>
<comment type="function">
    <text evidence="1">Catalyzes the conversion of dethiobiotin (DTB) to biotin by the insertion of a sulfur atom into dethiobiotin via a radical-based mechanism.</text>
</comment>
<comment type="catalytic activity">
    <reaction evidence="1">
        <text>(4R,5S)-dethiobiotin + (sulfur carrier)-SH + 2 reduced [2Fe-2S]-[ferredoxin] + 2 S-adenosyl-L-methionine = (sulfur carrier)-H + biotin + 2 5'-deoxyadenosine + 2 L-methionine + 2 oxidized [2Fe-2S]-[ferredoxin]</text>
        <dbReference type="Rhea" id="RHEA:22060"/>
        <dbReference type="Rhea" id="RHEA-COMP:10000"/>
        <dbReference type="Rhea" id="RHEA-COMP:10001"/>
        <dbReference type="Rhea" id="RHEA-COMP:14737"/>
        <dbReference type="Rhea" id="RHEA-COMP:14739"/>
        <dbReference type="ChEBI" id="CHEBI:17319"/>
        <dbReference type="ChEBI" id="CHEBI:29917"/>
        <dbReference type="ChEBI" id="CHEBI:33737"/>
        <dbReference type="ChEBI" id="CHEBI:33738"/>
        <dbReference type="ChEBI" id="CHEBI:57586"/>
        <dbReference type="ChEBI" id="CHEBI:57844"/>
        <dbReference type="ChEBI" id="CHEBI:59789"/>
        <dbReference type="ChEBI" id="CHEBI:64428"/>
        <dbReference type="ChEBI" id="CHEBI:149473"/>
        <dbReference type="EC" id="2.8.1.6"/>
    </reaction>
</comment>
<comment type="cofactor">
    <cofactor evidence="1">
        <name>[4Fe-4S] cluster</name>
        <dbReference type="ChEBI" id="CHEBI:49883"/>
    </cofactor>
    <text evidence="1">Binds 1 [4Fe-4S] cluster. The cluster is coordinated with 3 cysteines and an exchangeable S-adenosyl-L-methionine.</text>
</comment>
<comment type="cofactor">
    <cofactor evidence="1">
        <name>[2Fe-2S] cluster</name>
        <dbReference type="ChEBI" id="CHEBI:190135"/>
    </cofactor>
    <text evidence="1">Binds 1 [2Fe-2S] cluster. The cluster is coordinated with 3 cysteines and 1 arginine.</text>
</comment>
<comment type="pathway">
    <text evidence="1">Cofactor biosynthesis; biotin biosynthesis; biotin from 7,8-diaminononanoate: step 2/2.</text>
</comment>
<comment type="subunit">
    <text evidence="1">Homodimer.</text>
</comment>
<comment type="similarity">
    <text evidence="1">Belongs to the radical SAM superfamily. Biotin synthase family.</text>
</comment>
<organism>
    <name type="scientific">Escherichia coli O157:H7 (strain EC4115 / EHEC)</name>
    <dbReference type="NCBI Taxonomy" id="444450"/>
    <lineage>
        <taxon>Bacteria</taxon>
        <taxon>Pseudomonadati</taxon>
        <taxon>Pseudomonadota</taxon>
        <taxon>Gammaproteobacteria</taxon>
        <taxon>Enterobacterales</taxon>
        <taxon>Enterobacteriaceae</taxon>
        <taxon>Escherichia</taxon>
    </lineage>
</organism>
<protein>
    <recommendedName>
        <fullName evidence="1">Biotin synthase</fullName>
        <ecNumber evidence="1">2.8.1.6</ecNumber>
    </recommendedName>
</protein>
<evidence type="ECO:0000255" key="1">
    <source>
        <dbReference type="HAMAP-Rule" id="MF_01694"/>
    </source>
</evidence>
<evidence type="ECO:0000255" key="2">
    <source>
        <dbReference type="PROSITE-ProRule" id="PRU01266"/>
    </source>
</evidence>
<gene>
    <name evidence="1" type="primary">bioB</name>
    <name type="ordered locus">ECH74115_0923</name>
</gene>
<name>BIOB_ECO5E</name>
<dbReference type="EC" id="2.8.1.6" evidence="1"/>
<dbReference type="EMBL" id="CP001164">
    <property type="protein sequence ID" value="ACI39836.1"/>
    <property type="molecule type" value="Genomic_DNA"/>
</dbReference>
<dbReference type="RefSeq" id="WP_000951221.1">
    <property type="nucleotide sequence ID" value="NC_011353.1"/>
</dbReference>
<dbReference type="SMR" id="B5YRL4"/>
<dbReference type="KEGG" id="ecf:ECH74115_0923"/>
<dbReference type="HOGENOM" id="CLU_033172_1_2_6"/>
<dbReference type="UniPathway" id="UPA00078">
    <property type="reaction ID" value="UER00162"/>
</dbReference>
<dbReference type="GO" id="GO:0051537">
    <property type="term" value="F:2 iron, 2 sulfur cluster binding"/>
    <property type="evidence" value="ECO:0007669"/>
    <property type="project" value="UniProtKB-KW"/>
</dbReference>
<dbReference type="GO" id="GO:0051539">
    <property type="term" value="F:4 iron, 4 sulfur cluster binding"/>
    <property type="evidence" value="ECO:0007669"/>
    <property type="project" value="UniProtKB-KW"/>
</dbReference>
<dbReference type="GO" id="GO:0004076">
    <property type="term" value="F:biotin synthase activity"/>
    <property type="evidence" value="ECO:0007669"/>
    <property type="project" value="UniProtKB-UniRule"/>
</dbReference>
<dbReference type="GO" id="GO:0005506">
    <property type="term" value="F:iron ion binding"/>
    <property type="evidence" value="ECO:0007669"/>
    <property type="project" value="UniProtKB-UniRule"/>
</dbReference>
<dbReference type="GO" id="GO:0009102">
    <property type="term" value="P:biotin biosynthetic process"/>
    <property type="evidence" value="ECO:0007669"/>
    <property type="project" value="UniProtKB-UniRule"/>
</dbReference>
<dbReference type="CDD" id="cd01335">
    <property type="entry name" value="Radical_SAM"/>
    <property type="match status" value="1"/>
</dbReference>
<dbReference type="FunFam" id="3.20.20.70:FF:000011">
    <property type="entry name" value="Biotin synthase"/>
    <property type="match status" value="1"/>
</dbReference>
<dbReference type="Gene3D" id="3.20.20.70">
    <property type="entry name" value="Aldolase class I"/>
    <property type="match status" value="1"/>
</dbReference>
<dbReference type="HAMAP" id="MF_01694">
    <property type="entry name" value="BioB"/>
    <property type="match status" value="1"/>
</dbReference>
<dbReference type="InterPro" id="IPR013785">
    <property type="entry name" value="Aldolase_TIM"/>
</dbReference>
<dbReference type="InterPro" id="IPR010722">
    <property type="entry name" value="BATS_dom"/>
</dbReference>
<dbReference type="InterPro" id="IPR002684">
    <property type="entry name" value="Biotin_synth/BioAB"/>
</dbReference>
<dbReference type="InterPro" id="IPR024177">
    <property type="entry name" value="Biotin_synthase"/>
</dbReference>
<dbReference type="InterPro" id="IPR006638">
    <property type="entry name" value="Elp3/MiaA/NifB-like_rSAM"/>
</dbReference>
<dbReference type="InterPro" id="IPR007197">
    <property type="entry name" value="rSAM"/>
</dbReference>
<dbReference type="NCBIfam" id="TIGR00433">
    <property type="entry name" value="bioB"/>
    <property type="match status" value="1"/>
</dbReference>
<dbReference type="PANTHER" id="PTHR22976">
    <property type="entry name" value="BIOTIN SYNTHASE"/>
    <property type="match status" value="1"/>
</dbReference>
<dbReference type="PANTHER" id="PTHR22976:SF2">
    <property type="entry name" value="BIOTIN SYNTHASE, MITOCHONDRIAL"/>
    <property type="match status" value="1"/>
</dbReference>
<dbReference type="Pfam" id="PF06968">
    <property type="entry name" value="BATS"/>
    <property type="match status" value="1"/>
</dbReference>
<dbReference type="Pfam" id="PF04055">
    <property type="entry name" value="Radical_SAM"/>
    <property type="match status" value="1"/>
</dbReference>
<dbReference type="PIRSF" id="PIRSF001619">
    <property type="entry name" value="Biotin_synth"/>
    <property type="match status" value="1"/>
</dbReference>
<dbReference type="SFLD" id="SFLDF00272">
    <property type="entry name" value="biotin_synthase"/>
    <property type="match status" value="1"/>
</dbReference>
<dbReference type="SFLD" id="SFLDS00029">
    <property type="entry name" value="Radical_SAM"/>
    <property type="match status" value="1"/>
</dbReference>
<dbReference type="SMART" id="SM00876">
    <property type="entry name" value="BATS"/>
    <property type="match status" value="1"/>
</dbReference>
<dbReference type="SMART" id="SM00729">
    <property type="entry name" value="Elp3"/>
    <property type="match status" value="1"/>
</dbReference>
<dbReference type="SUPFAM" id="SSF102114">
    <property type="entry name" value="Radical SAM enzymes"/>
    <property type="match status" value="1"/>
</dbReference>
<dbReference type="PROSITE" id="PS51918">
    <property type="entry name" value="RADICAL_SAM"/>
    <property type="match status" value="1"/>
</dbReference>
<feature type="chain" id="PRO_0000381360" description="Biotin synthase">
    <location>
        <begin position="1"/>
        <end position="346"/>
    </location>
</feature>
<feature type="domain" description="Radical SAM core" evidence="2">
    <location>
        <begin position="38"/>
        <end position="256"/>
    </location>
</feature>
<feature type="binding site" evidence="1">
    <location>
        <position position="53"/>
    </location>
    <ligand>
        <name>[4Fe-4S] cluster</name>
        <dbReference type="ChEBI" id="CHEBI:49883"/>
        <note>4Fe-4S-S-AdoMet</note>
    </ligand>
</feature>
<feature type="binding site" evidence="1">
    <location>
        <position position="57"/>
    </location>
    <ligand>
        <name>[4Fe-4S] cluster</name>
        <dbReference type="ChEBI" id="CHEBI:49883"/>
        <note>4Fe-4S-S-AdoMet</note>
    </ligand>
</feature>
<feature type="binding site" evidence="1">
    <location>
        <position position="60"/>
    </location>
    <ligand>
        <name>[4Fe-4S] cluster</name>
        <dbReference type="ChEBI" id="CHEBI:49883"/>
        <note>4Fe-4S-S-AdoMet</note>
    </ligand>
</feature>
<feature type="binding site" evidence="1">
    <location>
        <position position="97"/>
    </location>
    <ligand>
        <name>[2Fe-2S] cluster</name>
        <dbReference type="ChEBI" id="CHEBI:190135"/>
    </ligand>
</feature>
<feature type="binding site" evidence="1">
    <location>
        <position position="128"/>
    </location>
    <ligand>
        <name>[2Fe-2S] cluster</name>
        <dbReference type="ChEBI" id="CHEBI:190135"/>
    </ligand>
</feature>
<feature type="binding site" evidence="1">
    <location>
        <position position="188"/>
    </location>
    <ligand>
        <name>[2Fe-2S] cluster</name>
        <dbReference type="ChEBI" id="CHEBI:190135"/>
    </ligand>
</feature>
<feature type="binding site" evidence="1">
    <location>
        <position position="260"/>
    </location>
    <ligand>
        <name>[2Fe-2S] cluster</name>
        <dbReference type="ChEBI" id="CHEBI:190135"/>
    </ligand>
</feature>
<proteinExistence type="inferred from homology"/>